<gene>
    <name type="primary">SERPINI1</name>
    <name type="synonym">PI12</name>
</gene>
<reference key="1">
    <citation type="journal article" date="1997" name="Genomics">
        <title>Human neuroserpin (PI12): cDNA cloning and chromosomal localization to 3q26.</title>
        <authorList>
            <person name="Schrimpf S.P."/>
            <person name="Bleiker A.J."/>
            <person name="Brecevic L."/>
            <person name="Kozlov S.V."/>
            <person name="Berger P."/>
            <person name="Osterwalder T."/>
            <person name="Krueger S.R."/>
            <person name="Schinzel A."/>
            <person name="Sonderegger P."/>
        </authorList>
    </citation>
    <scope>NUCLEOTIDE SEQUENCE [MRNA]</scope>
    <scope>TISSUE SPECIFICITY</scope>
    <source>
        <tissue>Retina</tissue>
    </source>
</reference>
<reference key="2">
    <citation type="submission" date="2000-03" db="EMBL/GenBank/DDBJ databases">
        <title>Genomic organization of the human neuroserpin (PI12) gene.</title>
        <authorList>
            <person name="Kinter J."/>
            <person name="Berger P."/>
            <person name="Kozlov S.V."/>
            <person name="Sonderegger P."/>
        </authorList>
    </citation>
    <scope>NUCLEOTIDE SEQUENCE [GENOMIC DNA]</scope>
</reference>
<reference key="3">
    <citation type="journal article" date="2004" name="Nat. Genet.">
        <title>Complete sequencing and characterization of 21,243 full-length human cDNAs.</title>
        <authorList>
            <person name="Ota T."/>
            <person name="Suzuki Y."/>
            <person name="Nishikawa T."/>
            <person name="Otsuki T."/>
            <person name="Sugiyama T."/>
            <person name="Irie R."/>
            <person name="Wakamatsu A."/>
            <person name="Hayashi K."/>
            <person name="Sato H."/>
            <person name="Nagai K."/>
            <person name="Kimura K."/>
            <person name="Makita H."/>
            <person name="Sekine M."/>
            <person name="Obayashi M."/>
            <person name="Nishi T."/>
            <person name="Shibahara T."/>
            <person name="Tanaka T."/>
            <person name="Ishii S."/>
            <person name="Yamamoto J."/>
            <person name="Saito K."/>
            <person name="Kawai Y."/>
            <person name="Isono Y."/>
            <person name="Nakamura Y."/>
            <person name="Nagahari K."/>
            <person name="Murakami K."/>
            <person name="Yasuda T."/>
            <person name="Iwayanagi T."/>
            <person name="Wagatsuma M."/>
            <person name="Shiratori A."/>
            <person name="Sudo H."/>
            <person name="Hosoiri T."/>
            <person name="Kaku Y."/>
            <person name="Kodaira H."/>
            <person name="Kondo H."/>
            <person name="Sugawara M."/>
            <person name="Takahashi M."/>
            <person name="Kanda K."/>
            <person name="Yokoi T."/>
            <person name="Furuya T."/>
            <person name="Kikkawa E."/>
            <person name="Omura Y."/>
            <person name="Abe K."/>
            <person name="Kamihara K."/>
            <person name="Katsuta N."/>
            <person name="Sato K."/>
            <person name="Tanikawa M."/>
            <person name="Yamazaki M."/>
            <person name="Ninomiya K."/>
            <person name="Ishibashi T."/>
            <person name="Yamashita H."/>
            <person name="Murakawa K."/>
            <person name="Fujimori K."/>
            <person name="Tanai H."/>
            <person name="Kimata M."/>
            <person name="Watanabe M."/>
            <person name="Hiraoka S."/>
            <person name="Chiba Y."/>
            <person name="Ishida S."/>
            <person name="Ono Y."/>
            <person name="Takiguchi S."/>
            <person name="Watanabe S."/>
            <person name="Yosida M."/>
            <person name="Hotuta T."/>
            <person name="Kusano J."/>
            <person name="Kanehori K."/>
            <person name="Takahashi-Fujii A."/>
            <person name="Hara H."/>
            <person name="Tanase T.-O."/>
            <person name="Nomura Y."/>
            <person name="Togiya S."/>
            <person name="Komai F."/>
            <person name="Hara R."/>
            <person name="Takeuchi K."/>
            <person name="Arita M."/>
            <person name="Imose N."/>
            <person name="Musashino K."/>
            <person name="Yuuki H."/>
            <person name="Oshima A."/>
            <person name="Sasaki N."/>
            <person name="Aotsuka S."/>
            <person name="Yoshikawa Y."/>
            <person name="Matsunawa H."/>
            <person name="Ichihara T."/>
            <person name="Shiohata N."/>
            <person name="Sano S."/>
            <person name="Moriya S."/>
            <person name="Momiyama H."/>
            <person name="Satoh N."/>
            <person name="Takami S."/>
            <person name="Terashima Y."/>
            <person name="Suzuki O."/>
            <person name="Nakagawa S."/>
            <person name="Senoh A."/>
            <person name="Mizoguchi H."/>
            <person name="Goto Y."/>
            <person name="Shimizu F."/>
            <person name="Wakebe H."/>
            <person name="Hishigaki H."/>
            <person name="Watanabe T."/>
            <person name="Sugiyama A."/>
            <person name="Takemoto M."/>
            <person name="Kawakami B."/>
            <person name="Yamazaki M."/>
            <person name="Watanabe K."/>
            <person name="Kumagai A."/>
            <person name="Itakura S."/>
            <person name="Fukuzumi Y."/>
            <person name="Fujimori Y."/>
            <person name="Komiyama M."/>
            <person name="Tashiro H."/>
            <person name="Tanigami A."/>
            <person name="Fujiwara T."/>
            <person name="Ono T."/>
            <person name="Yamada K."/>
            <person name="Fujii Y."/>
            <person name="Ozaki K."/>
            <person name="Hirao M."/>
            <person name="Ohmori Y."/>
            <person name="Kawabata A."/>
            <person name="Hikiji T."/>
            <person name="Kobatake N."/>
            <person name="Inagaki H."/>
            <person name="Ikema Y."/>
            <person name="Okamoto S."/>
            <person name="Okitani R."/>
            <person name="Kawakami T."/>
            <person name="Noguchi S."/>
            <person name="Itoh T."/>
            <person name="Shigeta K."/>
            <person name="Senba T."/>
            <person name="Matsumura K."/>
            <person name="Nakajima Y."/>
            <person name="Mizuno T."/>
            <person name="Morinaga M."/>
            <person name="Sasaki M."/>
            <person name="Togashi T."/>
            <person name="Oyama M."/>
            <person name="Hata H."/>
            <person name="Watanabe M."/>
            <person name="Komatsu T."/>
            <person name="Mizushima-Sugano J."/>
            <person name="Satoh T."/>
            <person name="Shirai Y."/>
            <person name="Takahashi Y."/>
            <person name="Nakagawa K."/>
            <person name="Okumura K."/>
            <person name="Nagase T."/>
            <person name="Nomura N."/>
            <person name="Kikuchi H."/>
            <person name="Masuho Y."/>
            <person name="Yamashita R."/>
            <person name="Nakai K."/>
            <person name="Yada T."/>
            <person name="Nakamura Y."/>
            <person name="Ohara O."/>
            <person name="Isogai T."/>
            <person name="Sugano S."/>
        </authorList>
    </citation>
    <scope>NUCLEOTIDE SEQUENCE [LARGE SCALE MRNA]</scope>
    <source>
        <tissue>Subthalamic nucleus</tissue>
    </source>
</reference>
<reference key="4">
    <citation type="journal article" date="2007" name="BMC Genomics">
        <title>The full-ORF clone resource of the German cDNA consortium.</title>
        <authorList>
            <person name="Bechtel S."/>
            <person name="Rosenfelder H."/>
            <person name="Duda A."/>
            <person name="Schmidt C.P."/>
            <person name="Ernst U."/>
            <person name="Wellenreuther R."/>
            <person name="Mehrle A."/>
            <person name="Schuster C."/>
            <person name="Bahr A."/>
            <person name="Bloecker H."/>
            <person name="Heubner D."/>
            <person name="Hoerlein A."/>
            <person name="Michel G."/>
            <person name="Wedler H."/>
            <person name="Koehrer K."/>
            <person name="Ottenwaelder B."/>
            <person name="Poustka A."/>
            <person name="Wiemann S."/>
            <person name="Schupp I."/>
        </authorList>
    </citation>
    <scope>NUCLEOTIDE SEQUENCE [LARGE SCALE MRNA]</scope>
    <source>
        <tissue>Brain cortex</tissue>
    </source>
</reference>
<reference key="5">
    <citation type="submission" date="2005-09" db="EMBL/GenBank/DDBJ databases">
        <authorList>
            <person name="Mural R.J."/>
            <person name="Istrail S."/>
            <person name="Sutton G.G."/>
            <person name="Florea L."/>
            <person name="Halpern A.L."/>
            <person name="Mobarry C.M."/>
            <person name="Lippert R."/>
            <person name="Walenz B."/>
            <person name="Shatkay H."/>
            <person name="Dew I."/>
            <person name="Miller J.R."/>
            <person name="Flanigan M.J."/>
            <person name="Edwards N.J."/>
            <person name="Bolanos R."/>
            <person name="Fasulo D."/>
            <person name="Halldorsson B.V."/>
            <person name="Hannenhalli S."/>
            <person name="Turner R."/>
            <person name="Yooseph S."/>
            <person name="Lu F."/>
            <person name="Nusskern D.R."/>
            <person name="Shue B.C."/>
            <person name="Zheng X.H."/>
            <person name="Zhong F."/>
            <person name="Delcher A.L."/>
            <person name="Huson D.H."/>
            <person name="Kravitz S.A."/>
            <person name="Mouchard L."/>
            <person name="Reinert K."/>
            <person name="Remington K.A."/>
            <person name="Clark A.G."/>
            <person name="Waterman M.S."/>
            <person name="Eichler E.E."/>
            <person name="Adams M.D."/>
            <person name="Hunkapiller M.W."/>
            <person name="Myers E.W."/>
            <person name="Venter J.C."/>
        </authorList>
    </citation>
    <scope>NUCLEOTIDE SEQUENCE [LARGE SCALE GENOMIC DNA]</scope>
</reference>
<reference key="6">
    <citation type="journal article" date="2004" name="Genome Res.">
        <title>The status, quality, and expansion of the NIH full-length cDNA project: the Mammalian Gene Collection (MGC).</title>
        <authorList>
            <consortium name="The MGC Project Team"/>
        </authorList>
    </citation>
    <scope>NUCLEOTIDE SEQUENCE [LARGE SCALE MRNA]</scope>
    <source>
        <tissue>Brain</tissue>
    </source>
</reference>
<reference key="7">
    <citation type="journal article" date="1998" name="J. Biol. Chem.">
        <title>The axonally secreted serine proteinase inhibitor, neuroserpin, inhibits plasminogen activators and plasmin but not thrombin.</title>
        <authorList>
            <person name="Osterwalder T."/>
            <person name="Cinelli P."/>
            <person name="Baici A."/>
            <person name="Pennella A."/>
            <person name="Krueger S.R."/>
            <person name="Schrimpf S.P."/>
            <person name="Meins M."/>
            <person name="Sonderegger P."/>
        </authorList>
    </citation>
    <scope>FUNCTION</scope>
</reference>
<reference key="8">
    <citation type="journal article" date="2007" name="Biochem. J.">
        <title>Identification of a novel targeting sequence for regulated secretion in the serine protease inhibitor neuroserpin.</title>
        <authorList>
            <person name="Ishigami S."/>
            <person name="Sandkvist M."/>
            <person name="Tsui F."/>
            <person name="Moore E."/>
            <person name="Coleman T.A."/>
            <person name="Lawrence D.A."/>
        </authorList>
    </citation>
    <scope>SUBCELLULAR LOCATION</scope>
    <scope>TISSUE SPECIFICITY</scope>
</reference>
<reference key="9">
    <citation type="journal article" date="2015" name="Mol. Cell. Proteomics">
        <title>Identification of chondroitin sulfate linkage region glycopeptides reveals prohormones as a novel class of proteoglycans.</title>
        <authorList>
            <person name="Noborn F."/>
            <person name="Gomez Toledo A."/>
            <person name="Sihlbom C."/>
            <person name="Lengqvist J."/>
            <person name="Fries E."/>
            <person name="Kjellen L."/>
            <person name="Nilsson J."/>
            <person name="Larson G."/>
        </authorList>
    </citation>
    <scope>SUBCELLULAR LOCATION</scope>
    <scope>TISSUE SPECIFICITY</scope>
    <scope>GLYCOSYLATION AT SER-403</scope>
</reference>
<reference key="10">
    <citation type="journal article" date="2015" name="Sci. Rep.">
        <title>The stability and activity of human neuroserpin are modulated by a salt bridge that stabilises the reactive centre loop.</title>
        <authorList>
            <person name="Noto R."/>
            <person name="Randazzo L."/>
            <person name="Raccosta S."/>
            <person name="Caccia S."/>
            <person name="Moriconi C."/>
            <person name="Miranda E."/>
            <person name="Martorana V."/>
            <person name="Manno M."/>
        </authorList>
    </citation>
    <scope>FUNCTION</scope>
    <scope>SUBUNIT</scope>
    <scope>MUTAGENESIS OF GLU-289</scope>
</reference>
<reference evidence="14 15" key="11">
    <citation type="journal article" date="2009" name="J. Mol. Biol.">
        <title>Human neuroserpin: structure and time-dependent inhibition.</title>
        <authorList>
            <person name="Ricagno S."/>
            <person name="Caccia S."/>
            <person name="Sorrentino G."/>
            <person name="Antonini G."/>
            <person name="Bolognesi M."/>
        </authorList>
    </citation>
    <scope>X-RAY CRYSTALLOGRAPHY (1.80 ANGSTROMS) OF 17-362 AND 363-410</scope>
    <scope>FUNCTION</scope>
    <scope>REACTIVE BOND</scope>
</reference>
<reference evidence="16" key="12">
    <citation type="journal article" date="2009" name="J. Mol. Biol.">
        <title>The 2.1-A crystal structure of native neuroserpin reveals unique structural elements that contribute to conformational instability.</title>
        <authorList>
            <person name="Takehara S."/>
            <person name="Onda M."/>
            <person name="Zhang J."/>
            <person name="Nishiyama M."/>
            <person name="Yang X."/>
            <person name="Mikami B."/>
            <person name="Lomas D.A."/>
        </authorList>
    </citation>
    <scope>X-RAY CRYSTALLOGRAPHY (2.09 ANGSTROMS) OF 17-400</scope>
    <scope>FUNCTION</scope>
    <scope>MUTAGENESIS OF ASN-161; LEU-162; VAL-163 AND SER-340</scope>
    <scope>SUBUNIT</scope>
    <scope>REACTIVE BOND</scope>
</reference>
<reference key="13">
    <citation type="journal article" date="1999" name="Nature">
        <title>Familial dementia caused by polymerization of mutant neuroserpin.</title>
        <authorList>
            <person name="Davis R.L."/>
            <person name="Shrimpton A.E."/>
            <person name="Holohan P.D."/>
            <person name="Bradshaw C."/>
            <person name="Feiglin D."/>
            <person name="Collins G.H."/>
            <person name="Sonderegger P."/>
            <person name="Kinter J."/>
            <person name="Becker L.M."/>
            <person name="Lacbawan F."/>
            <person name="Krasnewich D."/>
            <person name="Muenke M."/>
            <person name="Lawrence D.A."/>
            <person name="Yerby M.S."/>
            <person name="Shaw C.M."/>
            <person name="Gooptu B."/>
            <person name="Elliott P.R."/>
            <person name="Finch J.T."/>
            <person name="Carrell R.W."/>
            <person name="Lomas D.A."/>
        </authorList>
    </citation>
    <scope>VARIANTS FENIB PRO-49 AND ARG-52</scope>
</reference>
<reference key="14">
    <citation type="journal article" date="2002" name="J. Biol. Chem.">
        <title>Mutant Neuroserpin (S49P) that causes familial encephalopathy with neuroserpin inclusion bodies is a poor proteinase inhibitor and readily forms polymers in vitro.</title>
        <authorList>
            <person name="Belorgey D."/>
            <person name="Crowther D.C."/>
            <person name="Mahadeva R."/>
            <person name="Lomas D.A."/>
        </authorList>
    </citation>
    <scope>CHARACTERIZATION OF VARIANT FENIB PRO-49</scope>
    <scope>FUNCTION</scope>
</reference>
<accession>Q99574</accession>
<accession>A8K217</accession>
<accession>D3DNP1</accession>
<accession>Q6AHZ4</accession>
<dbReference type="EMBL" id="Z81326">
    <property type="protein sequence ID" value="CAB03626.1"/>
    <property type="molecule type" value="mRNA"/>
</dbReference>
<dbReference type="EMBL" id="AF248246">
    <property type="protein sequence ID" value="AAG01089.1"/>
    <property type="molecule type" value="Genomic_DNA"/>
</dbReference>
<dbReference type="EMBL" id="AF248244">
    <property type="protein sequence ID" value="AAG01089.1"/>
    <property type="status" value="JOINED"/>
    <property type="molecule type" value="Genomic_DNA"/>
</dbReference>
<dbReference type="EMBL" id="AF248245">
    <property type="protein sequence ID" value="AAG01089.1"/>
    <property type="status" value="JOINED"/>
    <property type="molecule type" value="Genomic_DNA"/>
</dbReference>
<dbReference type="EMBL" id="AK290082">
    <property type="protein sequence ID" value="BAF82771.1"/>
    <property type="molecule type" value="mRNA"/>
</dbReference>
<dbReference type="EMBL" id="CR627434">
    <property type="protein sequence ID" value="CAH10520.1"/>
    <property type="molecule type" value="mRNA"/>
</dbReference>
<dbReference type="EMBL" id="CH471052">
    <property type="protein sequence ID" value="EAW78571.1"/>
    <property type="molecule type" value="Genomic_DNA"/>
</dbReference>
<dbReference type="EMBL" id="CH471052">
    <property type="protein sequence ID" value="EAW78572.1"/>
    <property type="molecule type" value="Genomic_DNA"/>
</dbReference>
<dbReference type="EMBL" id="CH471052">
    <property type="protein sequence ID" value="EAW78573.1"/>
    <property type="molecule type" value="Genomic_DNA"/>
</dbReference>
<dbReference type="EMBL" id="BC018043">
    <property type="protein sequence ID" value="AAH18043.1"/>
    <property type="molecule type" value="mRNA"/>
</dbReference>
<dbReference type="CCDS" id="CCDS3203.1"/>
<dbReference type="RefSeq" id="NP_001116224.1">
    <property type="nucleotide sequence ID" value="NM_001122752.2"/>
</dbReference>
<dbReference type="RefSeq" id="NP_005016.1">
    <property type="nucleotide sequence ID" value="NM_005025.5"/>
</dbReference>
<dbReference type="RefSeq" id="XP_016862107.1">
    <property type="nucleotide sequence ID" value="XM_017006618.3"/>
</dbReference>
<dbReference type="RefSeq" id="XP_054202816.1">
    <property type="nucleotide sequence ID" value="XM_054346841.1"/>
</dbReference>
<dbReference type="PDB" id="3F02">
    <property type="method" value="X-ray"/>
    <property type="resolution" value="1.80 A"/>
    <property type="chains" value="A/B=17-362, C/D=363-410"/>
</dbReference>
<dbReference type="PDB" id="3F5N">
    <property type="method" value="X-ray"/>
    <property type="resolution" value="3.15 A"/>
    <property type="chains" value="A/B/C/D/E=17-410"/>
</dbReference>
<dbReference type="PDB" id="3FGQ">
    <property type="method" value="X-ray"/>
    <property type="resolution" value="2.09 A"/>
    <property type="chains" value="A/B=17-400"/>
</dbReference>
<dbReference type="PDBsum" id="3F02"/>
<dbReference type="PDBsum" id="3F5N"/>
<dbReference type="PDBsum" id="3FGQ"/>
<dbReference type="SMR" id="Q99574"/>
<dbReference type="BioGRID" id="111292">
    <property type="interactions" value="9"/>
</dbReference>
<dbReference type="FunCoup" id="Q99574">
    <property type="interactions" value="108"/>
</dbReference>
<dbReference type="IntAct" id="Q99574">
    <property type="interactions" value="6"/>
</dbReference>
<dbReference type="MINT" id="Q99574"/>
<dbReference type="STRING" id="9606.ENSP00000295777"/>
<dbReference type="MEROPS" id="I04.025"/>
<dbReference type="GlyConnect" id="1559">
    <property type="glycosylation" value="2 N-Linked glycans (1 site)"/>
</dbReference>
<dbReference type="GlyCosmos" id="Q99574">
    <property type="glycosylation" value="3 sites, 2 glycans"/>
</dbReference>
<dbReference type="GlyGen" id="Q99574">
    <property type="glycosylation" value="5 sites, 16 N-linked glycans (2 sites)"/>
</dbReference>
<dbReference type="iPTMnet" id="Q99574"/>
<dbReference type="PhosphoSitePlus" id="Q99574"/>
<dbReference type="BioMuta" id="SERPINI1"/>
<dbReference type="DMDM" id="3183087"/>
<dbReference type="jPOST" id="Q99574"/>
<dbReference type="MassIVE" id="Q99574"/>
<dbReference type="PaxDb" id="9606-ENSP00000295777"/>
<dbReference type="PeptideAtlas" id="Q99574"/>
<dbReference type="ProteomicsDB" id="78333"/>
<dbReference type="Pumba" id="Q99574"/>
<dbReference type="Antibodypedia" id="987">
    <property type="antibodies" value="469 antibodies from 38 providers"/>
</dbReference>
<dbReference type="DNASU" id="5274"/>
<dbReference type="Ensembl" id="ENST00000295777.9">
    <property type="protein sequence ID" value="ENSP00000295777.5"/>
    <property type="gene ID" value="ENSG00000163536.13"/>
</dbReference>
<dbReference type="Ensembl" id="ENST00000446050.7">
    <property type="protein sequence ID" value="ENSP00000397373.2"/>
    <property type="gene ID" value="ENSG00000163536.13"/>
</dbReference>
<dbReference type="GeneID" id="5274"/>
<dbReference type="KEGG" id="hsa:5274"/>
<dbReference type="MANE-Select" id="ENST00000446050.7">
    <property type="protein sequence ID" value="ENSP00000397373.2"/>
    <property type="RefSeq nucleotide sequence ID" value="NM_001122752.2"/>
    <property type="RefSeq protein sequence ID" value="NP_001116224.1"/>
</dbReference>
<dbReference type="UCSC" id="uc003ffa.5">
    <property type="organism name" value="human"/>
</dbReference>
<dbReference type="AGR" id="HGNC:8943"/>
<dbReference type="CTD" id="5274"/>
<dbReference type="DisGeNET" id="5274"/>
<dbReference type="GeneCards" id="SERPINI1"/>
<dbReference type="HGNC" id="HGNC:8943">
    <property type="gene designation" value="SERPINI1"/>
</dbReference>
<dbReference type="HPA" id="ENSG00000163536">
    <property type="expression patterns" value="Group enriched (brain, retina)"/>
</dbReference>
<dbReference type="MalaCards" id="SERPINI1"/>
<dbReference type="MIM" id="602445">
    <property type="type" value="gene"/>
</dbReference>
<dbReference type="MIM" id="604218">
    <property type="type" value="phenotype"/>
</dbReference>
<dbReference type="neXtProt" id="NX_Q99574"/>
<dbReference type="OpenTargets" id="ENSG00000163536"/>
<dbReference type="Orphanet" id="530303">
    <property type="disease" value="Progressive dementia with neuroserpin inclusion bodies"/>
</dbReference>
<dbReference type="PharmGKB" id="PA35511"/>
<dbReference type="VEuPathDB" id="HostDB:ENSG00000163536"/>
<dbReference type="eggNOG" id="KOG2392">
    <property type="taxonomic scope" value="Eukaryota"/>
</dbReference>
<dbReference type="GeneTree" id="ENSGT00940000158168"/>
<dbReference type="HOGENOM" id="CLU_023330_0_4_1"/>
<dbReference type="InParanoid" id="Q99574"/>
<dbReference type="OMA" id="IQNGFHV"/>
<dbReference type="OrthoDB" id="9518664at2759"/>
<dbReference type="PAN-GO" id="Q99574">
    <property type="GO annotations" value="3 GO annotations based on evolutionary models"/>
</dbReference>
<dbReference type="PhylomeDB" id="Q99574"/>
<dbReference type="TreeFam" id="TF352620"/>
<dbReference type="PathwayCommons" id="Q99574"/>
<dbReference type="SignaLink" id="Q99574"/>
<dbReference type="SIGNOR" id="Q99574"/>
<dbReference type="BioGRID-ORCS" id="5274">
    <property type="hits" value="15 hits in 1156 CRISPR screens"/>
</dbReference>
<dbReference type="EvolutionaryTrace" id="Q99574"/>
<dbReference type="GeneWiki" id="SERPINI1"/>
<dbReference type="GenomeRNAi" id="5274"/>
<dbReference type="Pharos" id="Q99574">
    <property type="development level" value="Tbio"/>
</dbReference>
<dbReference type="PRO" id="PR:Q99574"/>
<dbReference type="Proteomes" id="UP000005640">
    <property type="component" value="Chromosome 3"/>
</dbReference>
<dbReference type="RNAct" id="Q99574">
    <property type="molecule type" value="protein"/>
</dbReference>
<dbReference type="Bgee" id="ENSG00000163536">
    <property type="expression patterns" value="Expressed in frontal pole and 200 other cell types or tissues"/>
</dbReference>
<dbReference type="ExpressionAtlas" id="Q99574">
    <property type="expression patterns" value="baseline and differential"/>
</dbReference>
<dbReference type="GO" id="GO:0060205">
    <property type="term" value="C:cytoplasmic vesicle lumen"/>
    <property type="evidence" value="ECO:0000314"/>
    <property type="project" value="UniProtKB"/>
</dbReference>
<dbReference type="GO" id="GO:0070062">
    <property type="term" value="C:extracellular exosome"/>
    <property type="evidence" value="ECO:0007005"/>
    <property type="project" value="UniProtKB"/>
</dbReference>
<dbReference type="GO" id="GO:0005615">
    <property type="term" value="C:extracellular space"/>
    <property type="evidence" value="ECO:0000314"/>
    <property type="project" value="UniProtKB"/>
</dbReference>
<dbReference type="GO" id="GO:0043025">
    <property type="term" value="C:neuronal cell body"/>
    <property type="evidence" value="ECO:0000314"/>
    <property type="project" value="UniProtKB"/>
</dbReference>
<dbReference type="GO" id="GO:0043204">
    <property type="term" value="C:perikaryon"/>
    <property type="evidence" value="ECO:0007669"/>
    <property type="project" value="UniProtKB-SubCell"/>
</dbReference>
<dbReference type="GO" id="GO:0034774">
    <property type="term" value="C:secretory granule lumen"/>
    <property type="evidence" value="ECO:0007669"/>
    <property type="project" value="Ensembl"/>
</dbReference>
<dbReference type="GO" id="GO:0004867">
    <property type="term" value="F:serine-type endopeptidase inhibitor activity"/>
    <property type="evidence" value="ECO:0000314"/>
    <property type="project" value="UniProtKB"/>
</dbReference>
<dbReference type="GO" id="GO:0007417">
    <property type="term" value="P:central nervous system development"/>
    <property type="evidence" value="ECO:0000304"/>
    <property type="project" value="ProtInc"/>
</dbReference>
<dbReference type="GO" id="GO:0007422">
    <property type="term" value="P:peripheral nervous system development"/>
    <property type="evidence" value="ECO:0000304"/>
    <property type="project" value="ProtInc"/>
</dbReference>
<dbReference type="GO" id="GO:0010976">
    <property type="term" value="P:positive regulation of neuron projection development"/>
    <property type="evidence" value="ECO:0000250"/>
    <property type="project" value="ARUK-UCL"/>
</dbReference>
<dbReference type="CDD" id="cd02048">
    <property type="entry name" value="serpinI1_NSP"/>
    <property type="match status" value="1"/>
</dbReference>
<dbReference type="FunFam" id="3.30.497.10:FF:000005">
    <property type="entry name" value="serpin I2 isoform X1"/>
    <property type="match status" value="1"/>
</dbReference>
<dbReference type="Gene3D" id="2.30.39.10">
    <property type="entry name" value="Alpha-1-antitrypsin, domain 1"/>
    <property type="match status" value="1"/>
</dbReference>
<dbReference type="Gene3D" id="3.30.497.10">
    <property type="entry name" value="Antithrombin, subunit I, domain 2"/>
    <property type="match status" value="1"/>
</dbReference>
<dbReference type="InterPro" id="IPR023795">
    <property type="entry name" value="Serpin_CS"/>
</dbReference>
<dbReference type="InterPro" id="IPR023796">
    <property type="entry name" value="Serpin_dom"/>
</dbReference>
<dbReference type="InterPro" id="IPR000215">
    <property type="entry name" value="Serpin_fam"/>
</dbReference>
<dbReference type="InterPro" id="IPR036186">
    <property type="entry name" value="Serpin_sf"/>
</dbReference>
<dbReference type="InterPro" id="IPR042178">
    <property type="entry name" value="Serpin_sf_1"/>
</dbReference>
<dbReference type="InterPro" id="IPR042185">
    <property type="entry name" value="Serpin_sf_2"/>
</dbReference>
<dbReference type="PANTHER" id="PTHR11461:SF50">
    <property type="entry name" value="NEUROSERPIN"/>
    <property type="match status" value="1"/>
</dbReference>
<dbReference type="PANTHER" id="PTHR11461">
    <property type="entry name" value="SERINE PROTEASE INHIBITOR, SERPIN"/>
    <property type="match status" value="1"/>
</dbReference>
<dbReference type="Pfam" id="PF00079">
    <property type="entry name" value="Serpin"/>
    <property type="match status" value="1"/>
</dbReference>
<dbReference type="SMART" id="SM00093">
    <property type="entry name" value="SERPIN"/>
    <property type="match status" value="1"/>
</dbReference>
<dbReference type="SUPFAM" id="SSF56574">
    <property type="entry name" value="Serpins"/>
    <property type="match status" value="1"/>
</dbReference>
<dbReference type="PROSITE" id="PS00284">
    <property type="entry name" value="SERPIN"/>
    <property type="match status" value="1"/>
</dbReference>
<evidence type="ECO:0000255" key="1"/>
<evidence type="ECO:0000269" key="2">
    <source>
    </source>
</evidence>
<evidence type="ECO:0000269" key="3">
    <source>
    </source>
</evidence>
<evidence type="ECO:0000269" key="4">
    <source>
    </source>
</evidence>
<evidence type="ECO:0000269" key="5">
    <source>
    </source>
</evidence>
<evidence type="ECO:0000269" key="6">
    <source>
    </source>
</evidence>
<evidence type="ECO:0000269" key="7">
    <source>
    </source>
</evidence>
<evidence type="ECO:0000269" key="8">
    <source>
    </source>
</evidence>
<evidence type="ECO:0000269" key="9">
    <source>
    </source>
</evidence>
<evidence type="ECO:0000269" key="10">
    <source>
    </source>
</evidence>
<evidence type="ECO:0000305" key="11"/>
<evidence type="ECO:0000305" key="12">
    <source>
    </source>
</evidence>
<evidence type="ECO:0000305" key="13">
    <source>
    </source>
</evidence>
<evidence type="ECO:0007744" key="14">
    <source>
        <dbReference type="PDB" id="3F02"/>
    </source>
</evidence>
<evidence type="ECO:0007744" key="15">
    <source>
        <dbReference type="PDB" id="3F5N"/>
    </source>
</evidence>
<evidence type="ECO:0007744" key="16">
    <source>
        <dbReference type="PDB" id="3FGQ"/>
    </source>
</evidence>
<evidence type="ECO:0007829" key="17">
    <source>
        <dbReference type="PDB" id="3F02"/>
    </source>
</evidence>
<evidence type="ECO:0007829" key="18">
    <source>
        <dbReference type="PDB" id="3FGQ"/>
    </source>
</evidence>
<sequence>MAFLGLFSLLVLQSMATGATFPEEAIADLSVNMYNRLRATGEDENILFSPLSIALAMGMMELGAQGSTQKEIRHSMGYDSLKNGEEFSFLKEFSNMVTAKESQYVMKIANSLFVQNGFHVNEEFLQMMKKYFNAAVNHVDFSQNVAVANYINKWVENNTNNLVKDLVSPRDFDAATYLALINAVYFKGNWKSQFRPENTRTFSFTKDDESEVQIPMMYQQGEFYYGEFSDGSNEAGGIYQVLEIPYEGDEISMMLVLSRQEVPLATLEPLVKAQLVEEWANSVKKQKVEVYLPRFTVEQEIDLKDVLKALGITEIFIKDANLTGLSDNKEIFLSKAIHKSFLEVNEEGSEAAAVSGMIAISRMAVLYPQVIVDHPFFFLIRNRRTGTILFMGRVMHPETMNTSGHDFEEL</sequence>
<protein>
    <recommendedName>
        <fullName>Neuroserpin</fullName>
    </recommendedName>
    <alternativeName>
        <fullName>Peptidase inhibitor 12</fullName>
        <shortName>PI-12</shortName>
    </alternativeName>
    <alternativeName>
        <fullName>Serpin I1</fullName>
    </alternativeName>
</protein>
<keyword id="KW-0002">3D-structure</keyword>
<keyword id="KW-0968">Cytoplasmic vesicle</keyword>
<keyword id="KW-0225">Disease variant</keyword>
<keyword id="KW-0325">Glycoprotein</keyword>
<keyword id="KW-0523">Neurodegeneration</keyword>
<keyword id="KW-0646">Protease inhibitor</keyword>
<keyword id="KW-0654">Proteoglycan</keyword>
<keyword id="KW-1267">Proteomics identification</keyword>
<keyword id="KW-1185">Reference proteome</keyword>
<keyword id="KW-0964">Secreted</keyword>
<keyword id="KW-0722">Serine protease inhibitor</keyword>
<keyword id="KW-0732">Signal</keyword>
<organism>
    <name type="scientific">Homo sapiens</name>
    <name type="common">Human</name>
    <dbReference type="NCBI Taxonomy" id="9606"/>
    <lineage>
        <taxon>Eukaryota</taxon>
        <taxon>Metazoa</taxon>
        <taxon>Chordata</taxon>
        <taxon>Craniata</taxon>
        <taxon>Vertebrata</taxon>
        <taxon>Euteleostomi</taxon>
        <taxon>Mammalia</taxon>
        <taxon>Eutheria</taxon>
        <taxon>Euarchontoglires</taxon>
        <taxon>Primates</taxon>
        <taxon>Haplorrhini</taxon>
        <taxon>Catarrhini</taxon>
        <taxon>Hominidae</taxon>
        <taxon>Homo</taxon>
    </lineage>
</organism>
<comment type="function">
    <text evidence="3 5 6 8 10 11">Serine protease inhibitor that inhibits plasminogen activators and plasmin but not thrombin (PubMed:11880376, PubMed:19265707, PubMed:19285087, PubMed:26329378, PubMed:9442076). May be involved in the formation or reorganization of synaptic connections as well as for synaptic plasticity in the adult nervous system. May protect neurons from cell damage by tissue-type plasminogen activator (Probable).</text>
</comment>
<comment type="subunit">
    <text evidence="6 8">Monomer. Has a tendency to form large polymers already at 41 and 45 degrees Celsius (in vitro).</text>
</comment>
<comment type="subcellular location">
    <subcellularLocation>
        <location evidence="4 7">Secreted</location>
    </subcellularLocation>
    <subcellularLocation>
        <location evidence="12">Cytoplasmic vesicle</location>
        <location evidence="12">Secretory vesicle lumen</location>
    </subcellularLocation>
    <subcellularLocation>
        <location evidence="4">Perikaryon</location>
    </subcellularLocation>
</comment>
<comment type="tissue specificity">
    <text evidence="4 9">Detected in brain cortex and hippocampus pyramidal neurons (at protein level) (PubMed:17040209). Detected in cerebrospinal fluid (at protein level) (PubMed:25326458). Predominantly expressed in the brain (PubMed:9070919).</text>
</comment>
<comment type="disease" evidence="2 3">
    <disease id="DI-01567">
        <name>Encephalopathy, familial, with neuroserpin inclusion bodies</name>
        <acronym>FENIB</acronym>
        <description>A neurodegenerative disease clinically characterized by dementia. Additional features include intellectual decline, psychic seizures, progressive myoclonic epilepsy, and cerebral atrophy. Histologically, it is characterized by the presence of eosinophilic inclusion bodies (called Collins bodies) throughout the deeper layers of the cerebral cortex, leading to neuronal death.</description>
        <dbReference type="MIM" id="604218"/>
    </disease>
    <text>The disease is caused by variants affecting the gene represented in this entry.</text>
</comment>
<comment type="similarity">
    <text evidence="11">Belongs to the serpin family.</text>
</comment>
<feature type="signal peptide" evidence="1">
    <location>
        <begin position="1"/>
        <end position="16"/>
    </location>
</feature>
<feature type="chain" id="PRO_0000032521" description="Neuroserpin">
    <location>
        <begin position="17"/>
        <end position="410"/>
    </location>
</feature>
<feature type="site" description="Reactive bond" evidence="5 13">
    <location>
        <begin position="362"/>
        <end position="363"/>
    </location>
</feature>
<feature type="glycosylation site" description="N-linked (GlcNAc...) asparagine" evidence="1">
    <location>
        <position position="157"/>
    </location>
</feature>
<feature type="glycosylation site" description="N-linked (GlcNAc...) asparagine" evidence="1">
    <location>
        <position position="321"/>
    </location>
</feature>
<feature type="glycosylation site" description="N-linked (GlcNAc...) asparagine" evidence="1">
    <location>
        <position position="401"/>
    </location>
</feature>
<feature type="glycosylation site" description="O-linked (Xyl...) (chondroitin sulfate) serine" evidence="7">
    <location>
        <position position="403"/>
    </location>
</feature>
<feature type="sequence variant" id="VAR_008520" description="In FENIB; Syracuse; decreased protein stability; decreased proteinase inhibitor activity; increased tendency to form polymers; dbSNP:rs121909051." evidence="2 3">
    <original>S</original>
    <variation>P</variation>
    <location>
        <position position="49"/>
    </location>
</feature>
<feature type="sequence variant" id="VAR_008521" description="In FENIB; Portland." evidence="2">
    <original>S</original>
    <variation>R</variation>
    <location>
        <position position="52"/>
    </location>
</feature>
<feature type="mutagenesis site" description="Increases protein stability and abolishes tendency to form polymers. No effect on inhibitory activity." evidence="6">
    <original>N</original>
    <variation>G</variation>
    <location>
        <position position="161"/>
    </location>
</feature>
<feature type="mutagenesis site" description="Increases protein stability and abolishes tendency to form polymers. No effect on inhibitory activity." evidence="6">
    <original>L</original>
    <variation>K</variation>
    <location>
        <position position="162"/>
    </location>
</feature>
<feature type="mutagenesis site" description="Increases protein stability and decreases tendency to form polymers. No effect on inhibitory activity." evidence="6">
    <original>V</original>
    <variation>I</variation>
    <location>
        <position position="163"/>
    </location>
</feature>
<feature type="mutagenesis site" description="Slightly decreases inhibitory activity. No effect on thermal stability." evidence="8">
    <original>E</original>
    <variation>A</variation>
    <location>
        <position position="289"/>
    </location>
</feature>
<feature type="mutagenesis site" description="Increases protein stability and decreases tendency to form polymers. No effect on inhibitory activity." evidence="6">
    <original>S</original>
    <variation>A</variation>
    <location>
        <position position="340"/>
    </location>
</feature>
<feature type="sequence conflict" description="In Ref. 6; AAH18043." evidence="11" ref="6">
    <original>K</original>
    <variation>E</variation>
    <location>
        <position position="70"/>
    </location>
</feature>
<feature type="sequence conflict" description="In Ref. 6; AAH18043." evidence="11" ref="6">
    <original>S</original>
    <variation>Y</variation>
    <location>
        <position position="326"/>
    </location>
</feature>
<feature type="helix" evidence="17">
    <location>
        <begin position="25"/>
        <end position="40"/>
    </location>
</feature>
<feature type="strand" evidence="17">
    <location>
        <begin position="46"/>
        <end position="48"/>
    </location>
</feature>
<feature type="helix" evidence="17">
    <location>
        <begin position="50"/>
        <end position="63"/>
    </location>
</feature>
<feature type="helix" evidence="17">
    <location>
        <begin position="66"/>
        <end position="76"/>
    </location>
</feature>
<feature type="helix" evidence="17">
    <location>
        <begin position="86"/>
        <end position="91"/>
    </location>
</feature>
<feature type="turn" evidence="18">
    <location>
        <begin position="101"/>
        <end position="103"/>
    </location>
</feature>
<feature type="strand" evidence="17">
    <location>
        <begin position="105"/>
        <end position="115"/>
    </location>
</feature>
<feature type="helix" evidence="17">
    <location>
        <begin position="122"/>
        <end position="132"/>
    </location>
</feature>
<feature type="strand" evidence="17">
    <location>
        <begin position="135"/>
        <end position="139"/>
    </location>
</feature>
<feature type="helix" evidence="17">
    <location>
        <begin position="144"/>
        <end position="157"/>
    </location>
</feature>
<feature type="turn" evidence="17">
    <location>
        <begin position="158"/>
        <end position="161"/>
    </location>
</feature>
<feature type="helix" evidence="17">
    <location>
        <begin position="169"/>
        <end position="171"/>
    </location>
</feature>
<feature type="strand" evidence="17">
    <location>
        <begin position="176"/>
        <end position="192"/>
    </location>
</feature>
<feature type="helix" evidence="17">
    <location>
        <begin position="196"/>
        <end position="198"/>
    </location>
</feature>
<feature type="strand" evidence="17">
    <location>
        <begin position="200"/>
        <end position="205"/>
    </location>
</feature>
<feature type="strand" evidence="17">
    <location>
        <begin position="211"/>
        <end position="229"/>
    </location>
</feature>
<feature type="strand" evidence="17">
    <location>
        <begin position="238"/>
        <end position="246"/>
    </location>
</feature>
<feature type="strand" evidence="17">
    <location>
        <begin position="249"/>
        <end position="257"/>
    </location>
</feature>
<feature type="helix" evidence="17">
    <location>
        <begin position="264"/>
        <end position="267"/>
    </location>
</feature>
<feature type="helix" evidence="17">
    <location>
        <begin position="268"/>
        <end position="270"/>
    </location>
</feature>
<feature type="helix" evidence="17">
    <location>
        <begin position="273"/>
        <end position="282"/>
    </location>
</feature>
<feature type="strand" evidence="17">
    <location>
        <begin position="284"/>
        <end position="293"/>
    </location>
</feature>
<feature type="strand" evidence="17">
    <location>
        <begin position="295"/>
        <end position="302"/>
    </location>
</feature>
<feature type="helix" evidence="17">
    <location>
        <begin position="303"/>
        <end position="310"/>
    </location>
</feature>
<feature type="helix" evidence="17">
    <location>
        <begin position="314"/>
        <end position="316"/>
    </location>
</feature>
<feature type="turn" evidence="17">
    <location>
        <begin position="323"/>
        <end position="325"/>
    </location>
</feature>
<feature type="strand" evidence="17">
    <location>
        <begin position="331"/>
        <end position="344"/>
    </location>
</feature>
<feature type="strand" evidence="17">
    <location>
        <begin position="346"/>
        <end position="361"/>
    </location>
</feature>
<feature type="strand" evidence="17">
    <location>
        <begin position="369"/>
        <end position="371"/>
    </location>
</feature>
<feature type="strand" evidence="17">
    <location>
        <begin position="376"/>
        <end position="382"/>
    </location>
</feature>
<feature type="turn" evidence="17">
    <location>
        <begin position="383"/>
        <end position="385"/>
    </location>
</feature>
<feature type="strand" evidence="17">
    <location>
        <begin position="388"/>
        <end position="395"/>
    </location>
</feature>
<proteinExistence type="evidence at protein level"/>
<name>NEUS_HUMAN</name>